<comment type="catalytic activity">
    <reaction evidence="1">
        <text>(6R)-10-formyltetrahydrofolate + 5-amino-1-(5-phospho-beta-D-ribosyl)imidazole-4-carboxamide = 5-formamido-1-(5-phospho-D-ribosyl)imidazole-4-carboxamide + (6S)-5,6,7,8-tetrahydrofolate</text>
        <dbReference type="Rhea" id="RHEA:22192"/>
        <dbReference type="ChEBI" id="CHEBI:57453"/>
        <dbReference type="ChEBI" id="CHEBI:58467"/>
        <dbReference type="ChEBI" id="CHEBI:58475"/>
        <dbReference type="ChEBI" id="CHEBI:195366"/>
        <dbReference type="EC" id="2.1.2.3"/>
    </reaction>
</comment>
<comment type="catalytic activity">
    <reaction evidence="1">
        <text>IMP + H2O = 5-formamido-1-(5-phospho-D-ribosyl)imidazole-4-carboxamide</text>
        <dbReference type="Rhea" id="RHEA:18445"/>
        <dbReference type="ChEBI" id="CHEBI:15377"/>
        <dbReference type="ChEBI" id="CHEBI:58053"/>
        <dbReference type="ChEBI" id="CHEBI:58467"/>
        <dbReference type="EC" id="3.5.4.10"/>
    </reaction>
</comment>
<comment type="pathway">
    <text evidence="1">Purine metabolism; IMP biosynthesis via de novo pathway; 5-formamido-1-(5-phospho-D-ribosyl)imidazole-4-carboxamide from 5-amino-1-(5-phospho-D-ribosyl)imidazole-4-carboxamide (10-formyl THF route): step 1/1.</text>
</comment>
<comment type="pathway">
    <text evidence="1">Purine metabolism; IMP biosynthesis via de novo pathway; IMP from 5-formamido-1-(5-phospho-D-ribosyl)imidazole-4-carboxamide: step 1/1.</text>
</comment>
<comment type="domain">
    <text evidence="1">The IMP cyclohydrolase activity resides in the N-terminal region.</text>
</comment>
<comment type="similarity">
    <text evidence="1">Belongs to the PurH family.</text>
</comment>
<feature type="chain" id="PRO_1000018979" description="Bifunctional purine biosynthesis protein PurH">
    <location>
        <begin position="1"/>
        <end position="516"/>
    </location>
</feature>
<feature type="domain" description="MGS-like" evidence="2">
    <location>
        <begin position="1"/>
        <end position="146"/>
    </location>
</feature>
<name>PUR9_PARMW</name>
<gene>
    <name evidence="1" type="primary">purH</name>
    <name type="ordered locus">SYNW0249</name>
</gene>
<proteinExistence type="inferred from homology"/>
<dbReference type="EC" id="2.1.2.3" evidence="1"/>
<dbReference type="EC" id="3.5.4.10" evidence="1"/>
<dbReference type="EMBL" id="BX569689">
    <property type="protein sequence ID" value="CAE06764.1"/>
    <property type="molecule type" value="Genomic_DNA"/>
</dbReference>
<dbReference type="RefSeq" id="WP_011127125.1">
    <property type="nucleotide sequence ID" value="NC_005070.1"/>
</dbReference>
<dbReference type="SMR" id="Q7TTX6"/>
<dbReference type="STRING" id="84588.SYNW0249"/>
<dbReference type="KEGG" id="syw:SYNW0249"/>
<dbReference type="eggNOG" id="COG0138">
    <property type="taxonomic scope" value="Bacteria"/>
</dbReference>
<dbReference type="HOGENOM" id="CLU_016316_5_2_3"/>
<dbReference type="UniPathway" id="UPA00074">
    <property type="reaction ID" value="UER00133"/>
</dbReference>
<dbReference type="UniPathway" id="UPA00074">
    <property type="reaction ID" value="UER00135"/>
</dbReference>
<dbReference type="Proteomes" id="UP000001422">
    <property type="component" value="Chromosome"/>
</dbReference>
<dbReference type="GO" id="GO:0005829">
    <property type="term" value="C:cytosol"/>
    <property type="evidence" value="ECO:0007669"/>
    <property type="project" value="TreeGrafter"/>
</dbReference>
<dbReference type="GO" id="GO:0003937">
    <property type="term" value="F:IMP cyclohydrolase activity"/>
    <property type="evidence" value="ECO:0007669"/>
    <property type="project" value="UniProtKB-UniRule"/>
</dbReference>
<dbReference type="GO" id="GO:0004643">
    <property type="term" value="F:phosphoribosylaminoimidazolecarboxamide formyltransferase activity"/>
    <property type="evidence" value="ECO:0007669"/>
    <property type="project" value="UniProtKB-UniRule"/>
</dbReference>
<dbReference type="GO" id="GO:0006189">
    <property type="term" value="P:'de novo' IMP biosynthetic process"/>
    <property type="evidence" value="ECO:0007669"/>
    <property type="project" value="UniProtKB-UniRule"/>
</dbReference>
<dbReference type="CDD" id="cd01421">
    <property type="entry name" value="IMPCH"/>
    <property type="match status" value="1"/>
</dbReference>
<dbReference type="FunFam" id="3.40.140.20:FF:000001">
    <property type="entry name" value="Bifunctional purine biosynthesis protein PurH"/>
    <property type="match status" value="1"/>
</dbReference>
<dbReference type="FunFam" id="3.40.50.1380:FF:000001">
    <property type="entry name" value="Bifunctional purine biosynthesis protein PurH"/>
    <property type="match status" value="1"/>
</dbReference>
<dbReference type="Gene3D" id="3.40.140.20">
    <property type="match status" value="2"/>
</dbReference>
<dbReference type="Gene3D" id="3.40.50.1380">
    <property type="entry name" value="Methylglyoxal synthase-like domain"/>
    <property type="match status" value="1"/>
</dbReference>
<dbReference type="HAMAP" id="MF_00139">
    <property type="entry name" value="PurH"/>
    <property type="match status" value="1"/>
</dbReference>
<dbReference type="InterPro" id="IPR024051">
    <property type="entry name" value="AICAR_Tfase_dup_dom_sf"/>
</dbReference>
<dbReference type="InterPro" id="IPR016193">
    <property type="entry name" value="Cytidine_deaminase-like"/>
</dbReference>
<dbReference type="InterPro" id="IPR011607">
    <property type="entry name" value="MGS-like_dom"/>
</dbReference>
<dbReference type="InterPro" id="IPR036914">
    <property type="entry name" value="MGS-like_dom_sf"/>
</dbReference>
<dbReference type="InterPro" id="IPR002695">
    <property type="entry name" value="PurH-like"/>
</dbReference>
<dbReference type="NCBIfam" id="NF002049">
    <property type="entry name" value="PRK00881.1"/>
    <property type="match status" value="1"/>
</dbReference>
<dbReference type="NCBIfam" id="TIGR00355">
    <property type="entry name" value="purH"/>
    <property type="match status" value="1"/>
</dbReference>
<dbReference type="PANTHER" id="PTHR11692:SF0">
    <property type="entry name" value="BIFUNCTIONAL PURINE BIOSYNTHESIS PROTEIN ATIC"/>
    <property type="match status" value="1"/>
</dbReference>
<dbReference type="PANTHER" id="PTHR11692">
    <property type="entry name" value="BIFUNCTIONAL PURINE BIOSYNTHESIS PROTEIN PURH"/>
    <property type="match status" value="1"/>
</dbReference>
<dbReference type="Pfam" id="PF01808">
    <property type="entry name" value="AICARFT_IMPCHas"/>
    <property type="match status" value="1"/>
</dbReference>
<dbReference type="Pfam" id="PF02142">
    <property type="entry name" value="MGS"/>
    <property type="match status" value="1"/>
</dbReference>
<dbReference type="PIRSF" id="PIRSF000414">
    <property type="entry name" value="AICARFT_IMPCHas"/>
    <property type="match status" value="1"/>
</dbReference>
<dbReference type="SMART" id="SM00798">
    <property type="entry name" value="AICARFT_IMPCHas"/>
    <property type="match status" value="1"/>
</dbReference>
<dbReference type="SMART" id="SM00851">
    <property type="entry name" value="MGS"/>
    <property type="match status" value="1"/>
</dbReference>
<dbReference type="SUPFAM" id="SSF53927">
    <property type="entry name" value="Cytidine deaminase-like"/>
    <property type="match status" value="1"/>
</dbReference>
<dbReference type="SUPFAM" id="SSF52335">
    <property type="entry name" value="Methylglyoxal synthase-like"/>
    <property type="match status" value="1"/>
</dbReference>
<dbReference type="PROSITE" id="PS51855">
    <property type="entry name" value="MGS"/>
    <property type="match status" value="1"/>
</dbReference>
<sequence>MAPFALLSVSDKNGVVALAEALHRTHGYALLSSGGTAKVLEDAGLPVTRMSEHNGAPEILGGRVKTLHPRVHGGILAKRGDAAHQADLEQQGIPAIDLVVVNLYPFRETVARADVTWDQAIENIDIGGPAMVRAAAKNHADVAVLTSPDQYSSVLAAMAESAGRVPADLCRQLALEAFQHTAAYDTAISRWMAGEVELVSSPWLEAVPLRQTLRYGENPHQKARWFSHPRQGWGGAIQLQGKELSTNNLLDLEAALATVREFGYGPNAVGPAAVVVKHTNPCGVAVGPVVASALTRALDADRVSAFGGIVAINGPVEAAAARELTGLFLECVVAPSFSPEAREILAAKANLRLLELSPDAIAAAGPDHVRSILGGLLVQDLDDQVMTPDQWTLATKRPPTAQEKQDLEFAWRLVRHVRSNAIVVARDGQSLGVGAGQMNRVGSARIALEAAAEKAKGAVLASDGFFPFDDTVRLAASHGITAVIHPGGSLRDGESVKACDELGLAMLLTGRRHFLH</sequence>
<protein>
    <recommendedName>
        <fullName evidence="1">Bifunctional purine biosynthesis protein PurH</fullName>
    </recommendedName>
    <domain>
        <recommendedName>
            <fullName evidence="1">Phosphoribosylaminoimidazolecarboxamide formyltransferase</fullName>
            <ecNumber evidence="1">2.1.2.3</ecNumber>
        </recommendedName>
        <alternativeName>
            <fullName evidence="1">AICAR transformylase</fullName>
        </alternativeName>
    </domain>
    <domain>
        <recommendedName>
            <fullName evidence="1">IMP cyclohydrolase</fullName>
            <ecNumber evidence="1">3.5.4.10</ecNumber>
        </recommendedName>
        <alternativeName>
            <fullName evidence="1">ATIC</fullName>
        </alternativeName>
        <alternativeName>
            <fullName evidence="1">IMP synthase</fullName>
        </alternativeName>
        <alternativeName>
            <fullName evidence="1">Inosinicase</fullName>
        </alternativeName>
    </domain>
</protein>
<evidence type="ECO:0000255" key="1">
    <source>
        <dbReference type="HAMAP-Rule" id="MF_00139"/>
    </source>
</evidence>
<evidence type="ECO:0000255" key="2">
    <source>
        <dbReference type="PROSITE-ProRule" id="PRU01202"/>
    </source>
</evidence>
<accession>Q7TTX6</accession>
<reference key="1">
    <citation type="journal article" date="2003" name="Nature">
        <title>The genome of a motile marine Synechococcus.</title>
        <authorList>
            <person name="Palenik B."/>
            <person name="Brahamsha B."/>
            <person name="Larimer F.W."/>
            <person name="Land M.L."/>
            <person name="Hauser L."/>
            <person name="Chain P."/>
            <person name="Lamerdin J.E."/>
            <person name="Regala W."/>
            <person name="Allen E.E."/>
            <person name="McCarren J."/>
            <person name="Paulsen I.T."/>
            <person name="Dufresne A."/>
            <person name="Partensky F."/>
            <person name="Webb E.A."/>
            <person name="Waterbury J."/>
        </authorList>
    </citation>
    <scope>NUCLEOTIDE SEQUENCE [LARGE SCALE GENOMIC DNA]</scope>
    <source>
        <strain>WH8102</strain>
    </source>
</reference>
<organism>
    <name type="scientific">Parasynechococcus marenigrum (strain WH8102)</name>
    <dbReference type="NCBI Taxonomy" id="84588"/>
    <lineage>
        <taxon>Bacteria</taxon>
        <taxon>Bacillati</taxon>
        <taxon>Cyanobacteriota</taxon>
        <taxon>Cyanophyceae</taxon>
        <taxon>Synechococcales</taxon>
        <taxon>Prochlorococcaceae</taxon>
        <taxon>Parasynechococcus</taxon>
        <taxon>Parasynechococcus marenigrum</taxon>
    </lineage>
</organism>
<keyword id="KW-0378">Hydrolase</keyword>
<keyword id="KW-0511">Multifunctional enzyme</keyword>
<keyword id="KW-0658">Purine biosynthesis</keyword>
<keyword id="KW-0808">Transferase</keyword>